<dbReference type="EMBL" id="CU329672">
    <property type="protein sequence ID" value="CAA21221.1"/>
    <property type="molecule type" value="Genomic_DNA"/>
</dbReference>
<dbReference type="PIR" id="T41103">
    <property type="entry name" value="T41103"/>
</dbReference>
<dbReference type="RefSeq" id="NP_587897.1">
    <property type="nucleotide sequence ID" value="NM_001022889.2"/>
</dbReference>
<dbReference type="SMR" id="P0CT84"/>
<dbReference type="FunCoup" id="P0CT84">
    <property type="interactions" value="407"/>
</dbReference>
<dbReference type="STRING" id="284812.P0CT84"/>
<dbReference type="iPTMnet" id="P0CT84"/>
<dbReference type="EnsemblFungi" id="SPCC16C4.13c.1">
    <property type="protein sequence ID" value="SPCC16C4.13c.1:pep"/>
    <property type="gene ID" value="SPCC16C4.13c"/>
</dbReference>
<dbReference type="EnsemblFungi" id="SPCC31H12.04c.1">
    <property type="protein sequence ID" value="SPCC31H12.04c.1:pep"/>
    <property type="gene ID" value="SPCC31H12.04c"/>
</dbReference>
<dbReference type="GeneID" id="2539010"/>
<dbReference type="KEGG" id="spo:2539010"/>
<dbReference type="KEGG" id="spo:2539186"/>
<dbReference type="PomBase" id="SPCC31H12.04c">
    <property type="gene designation" value="rpl1202"/>
</dbReference>
<dbReference type="VEuPathDB" id="FungiDB:SPCC16C4.13c"/>
<dbReference type="VEuPathDB" id="FungiDB:SPCC31H12.04c"/>
<dbReference type="InParanoid" id="P0CT84"/>
<dbReference type="OMA" id="QPPHDVI"/>
<dbReference type="PhylomeDB" id="P0CT84"/>
<dbReference type="Reactome" id="R-SPO-156827">
    <property type="pathway name" value="L13a-mediated translational silencing of Ceruloplasmin expression"/>
</dbReference>
<dbReference type="Reactome" id="R-SPO-1799339">
    <property type="pathway name" value="SRP-dependent cotranslational protein targeting to membrane"/>
</dbReference>
<dbReference type="Reactome" id="R-SPO-72689">
    <property type="pathway name" value="Formation of a pool of free 40S subunits"/>
</dbReference>
<dbReference type="Reactome" id="R-SPO-72706">
    <property type="pathway name" value="GTP hydrolysis and joining of the 60S ribosomal subunit"/>
</dbReference>
<dbReference type="Reactome" id="R-SPO-975956">
    <property type="pathway name" value="Nonsense Mediated Decay (NMD) independent of the Exon Junction Complex (EJC)"/>
</dbReference>
<dbReference type="Reactome" id="R-SPO-975957">
    <property type="pathway name" value="Nonsense Mediated Decay (NMD) enhanced by the Exon Junction Complex (EJC)"/>
</dbReference>
<dbReference type="PRO" id="PR:P0CT84"/>
<dbReference type="Proteomes" id="UP000002485">
    <property type="component" value="Chromosome III"/>
</dbReference>
<dbReference type="GO" id="GO:0005829">
    <property type="term" value="C:cytosol"/>
    <property type="evidence" value="ECO:0007005"/>
    <property type="project" value="PomBase"/>
</dbReference>
<dbReference type="GO" id="GO:0022625">
    <property type="term" value="C:cytosolic large ribosomal subunit"/>
    <property type="evidence" value="ECO:0000318"/>
    <property type="project" value="GO_Central"/>
</dbReference>
<dbReference type="GO" id="GO:0070180">
    <property type="term" value="F:large ribosomal subunit rRNA binding"/>
    <property type="evidence" value="ECO:0000318"/>
    <property type="project" value="GO_Central"/>
</dbReference>
<dbReference type="GO" id="GO:0003735">
    <property type="term" value="F:structural constituent of ribosome"/>
    <property type="evidence" value="ECO:0000318"/>
    <property type="project" value="GO_Central"/>
</dbReference>
<dbReference type="GO" id="GO:0002181">
    <property type="term" value="P:cytoplasmic translation"/>
    <property type="evidence" value="ECO:0000266"/>
    <property type="project" value="PomBase"/>
</dbReference>
<dbReference type="GO" id="GO:0180023">
    <property type="term" value="P:cytosolic large ribosomal subunit assembly"/>
    <property type="evidence" value="ECO:0000266"/>
    <property type="project" value="PomBase"/>
</dbReference>
<dbReference type="GO" id="GO:0006412">
    <property type="term" value="P:translation"/>
    <property type="evidence" value="ECO:0000318"/>
    <property type="project" value="GO_Central"/>
</dbReference>
<dbReference type="FunFam" id="1.10.10.250:FF:000002">
    <property type="entry name" value="60S ribosomal protein L12"/>
    <property type="match status" value="1"/>
</dbReference>
<dbReference type="FunFam" id="3.30.1550.10:FF:000002">
    <property type="entry name" value="60S ribosomal protein L12"/>
    <property type="match status" value="1"/>
</dbReference>
<dbReference type="Gene3D" id="1.10.10.250">
    <property type="entry name" value="Ribosomal protein L11, C-terminal domain"/>
    <property type="match status" value="1"/>
</dbReference>
<dbReference type="Gene3D" id="3.30.1550.10">
    <property type="entry name" value="Ribosomal protein L11/L12, N-terminal domain"/>
    <property type="match status" value="1"/>
</dbReference>
<dbReference type="HAMAP" id="MF_00736">
    <property type="entry name" value="Ribosomal_uL11"/>
    <property type="match status" value="1"/>
</dbReference>
<dbReference type="InterPro" id="IPR000911">
    <property type="entry name" value="Ribosomal_uL11"/>
</dbReference>
<dbReference type="InterPro" id="IPR020783">
    <property type="entry name" value="Ribosomal_uL11_C"/>
</dbReference>
<dbReference type="InterPro" id="IPR036769">
    <property type="entry name" value="Ribosomal_uL11_C_sf"/>
</dbReference>
<dbReference type="InterPro" id="IPR020785">
    <property type="entry name" value="Ribosomal_uL11_CS"/>
</dbReference>
<dbReference type="InterPro" id="IPR020784">
    <property type="entry name" value="Ribosomal_uL11_N"/>
</dbReference>
<dbReference type="InterPro" id="IPR036796">
    <property type="entry name" value="Ribosomal_uL11_N_sf"/>
</dbReference>
<dbReference type="PANTHER" id="PTHR11661">
    <property type="entry name" value="60S RIBOSOMAL PROTEIN L12"/>
    <property type="match status" value="1"/>
</dbReference>
<dbReference type="PANTHER" id="PTHR11661:SF2">
    <property type="entry name" value="LARGE RIBOSOMAL SUBUNIT PROTEIN UL11"/>
    <property type="match status" value="1"/>
</dbReference>
<dbReference type="Pfam" id="PF00298">
    <property type="entry name" value="Ribosomal_L11"/>
    <property type="match status" value="1"/>
</dbReference>
<dbReference type="Pfam" id="PF03946">
    <property type="entry name" value="Ribosomal_L11_N"/>
    <property type="match status" value="1"/>
</dbReference>
<dbReference type="SMART" id="SM00649">
    <property type="entry name" value="RL11"/>
    <property type="match status" value="1"/>
</dbReference>
<dbReference type="SUPFAM" id="SSF54747">
    <property type="entry name" value="Ribosomal L11/L12e N-terminal domain"/>
    <property type="match status" value="1"/>
</dbReference>
<dbReference type="SUPFAM" id="SSF46906">
    <property type="entry name" value="Ribosomal protein L11, C-terminal domain"/>
    <property type="match status" value="1"/>
</dbReference>
<dbReference type="PROSITE" id="PS00359">
    <property type="entry name" value="RIBOSOMAL_L11"/>
    <property type="match status" value="1"/>
</dbReference>
<accession>P0CT84</accession>
<accession>O75000</accession>
<protein>
    <recommendedName>
        <fullName evidence="4">Large ribosomal subunit protein uL11B</fullName>
    </recommendedName>
    <alternativeName>
        <fullName>60S ribosomal protein L12-B</fullName>
    </alternativeName>
</protein>
<comment type="function">
    <text evidence="1">This protein binds directly to 26S ribosomal RNA.</text>
</comment>
<comment type="function">
    <text evidence="2">Component of the ribosome, a large ribonucleoprotein complex responsible for the synthesis of proteins in the cell. The small ribosomal subunit (SSU) binds messenger RNAs (mRNAs) and translates the encoded message by selecting cognate aminoacyl-transfer RNA (tRNA) molecules. The large subunit (LSU) contains the ribosomal catalytic site termed the peptidyl transferase center (PTC), which catalyzes the formation of peptide bonds, thereby polymerizing the amino acids delivered by tRNAs into a polypeptide chain. The nascent polypeptides leave the ribosome through a tunnel in the LSU and interact with protein factors that function in enzymatic processing, targeting, and the membrane insertion of nascent chains at the exit of the ribosomal tunnel.</text>
</comment>
<comment type="subunit">
    <text evidence="2">Component of the large ribosomal subunit (LSU). Mature yeast ribosomes consist of a small (40S) and a large (60S) subunit. The 40S small subunit contains 1 molecule of ribosomal RNA (18S rRNA) and at least 33 different proteins. The large 60S subunit contains 3 rRNA molecules (25S, 5.8S and 5S rRNA) and at least 46 different proteins.</text>
</comment>
<comment type="subcellular location">
    <subcellularLocation>
        <location evidence="3">Cytoplasm</location>
    </subcellularLocation>
</comment>
<comment type="miscellaneous">
    <text>There are 2 genes for uL11 in S.pombe.</text>
</comment>
<comment type="similarity">
    <text evidence="4">Belongs to the universal ribosomal protein uL11 family.</text>
</comment>
<organism>
    <name type="scientific">Schizosaccharomyces pombe (strain 972 / ATCC 24843)</name>
    <name type="common">Fission yeast</name>
    <dbReference type="NCBI Taxonomy" id="284812"/>
    <lineage>
        <taxon>Eukaryota</taxon>
        <taxon>Fungi</taxon>
        <taxon>Dikarya</taxon>
        <taxon>Ascomycota</taxon>
        <taxon>Taphrinomycotina</taxon>
        <taxon>Schizosaccharomycetes</taxon>
        <taxon>Schizosaccharomycetales</taxon>
        <taxon>Schizosaccharomycetaceae</taxon>
        <taxon>Schizosaccharomyces</taxon>
    </lineage>
</organism>
<keyword id="KW-0963">Cytoplasm</keyword>
<keyword id="KW-0488">Methylation</keyword>
<keyword id="KW-0597">Phosphoprotein</keyword>
<keyword id="KW-1185">Reference proteome</keyword>
<keyword id="KW-0687">Ribonucleoprotein</keyword>
<keyword id="KW-0689">Ribosomal protein</keyword>
<keyword id="KW-0694">RNA-binding</keyword>
<proteinExistence type="inferred from homology"/>
<gene>
    <name type="primary">rpl1202</name>
    <name type="ORF">SPCC31H12.04c</name>
</gene>
<reference key="1">
    <citation type="journal article" date="2002" name="Nature">
        <title>The genome sequence of Schizosaccharomyces pombe.</title>
        <authorList>
            <person name="Wood V."/>
            <person name="Gwilliam R."/>
            <person name="Rajandream M.A."/>
            <person name="Lyne M.H."/>
            <person name="Lyne R."/>
            <person name="Stewart A."/>
            <person name="Sgouros J.G."/>
            <person name="Peat N."/>
            <person name="Hayles J."/>
            <person name="Baker S.G."/>
            <person name="Basham D."/>
            <person name="Bowman S."/>
            <person name="Brooks K."/>
            <person name="Brown D."/>
            <person name="Brown S."/>
            <person name="Chillingworth T."/>
            <person name="Churcher C.M."/>
            <person name="Collins M."/>
            <person name="Connor R."/>
            <person name="Cronin A."/>
            <person name="Davis P."/>
            <person name="Feltwell T."/>
            <person name="Fraser A."/>
            <person name="Gentles S."/>
            <person name="Goble A."/>
            <person name="Hamlin N."/>
            <person name="Harris D.E."/>
            <person name="Hidalgo J."/>
            <person name="Hodgson G."/>
            <person name="Holroyd S."/>
            <person name="Hornsby T."/>
            <person name="Howarth S."/>
            <person name="Huckle E.J."/>
            <person name="Hunt S."/>
            <person name="Jagels K."/>
            <person name="James K.D."/>
            <person name="Jones L."/>
            <person name="Jones M."/>
            <person name="Leather S."/>
            <person name="McDonald S."/>
            <person name="McLean J."/>
            <person name="Mooney P."/>
            <person name="Moule S."/>
            <person name="Mungall K.L."/>
            <person name="Murphy L.D."/>
            <person name="Niblett D."/>
            <person name="Odell C."/>
            <person name="Oliver K."/>
            <person name="O'Neil S."/>
            <person name="Pearson D."/>
            <person name="Quail M.A."/>
            <person name="Rabbinowitsch E."/>
            <person name="Rutherford K.M."/>
            <person name="Rutter S."/>
            <person name="Saunders D."/>
            <person name="Seeger K."/>
            <person name="Sharp S."/>
            <person name="Skelton J."/>
            <person name="Simmonds M.N."/>
            <person name="Squares R."/>
            <person name="Squares S."/>
            <person name="Stevens K."/>
            <person name="Taylor K."/>
            <person name="Taylor R.G."/>
            <person name="Tivey A."/>
            <person name="Walsh S.V."/>
            <person name="Warren T."/>
            <person name="Whitehead S."/>
            <person name="Woodward J.R."/>
            <person name="Volckaert G."/>
            <person name="Aert R."/>
            <person name="Robben J."/>
            <person name="Grymonprez B."/>
            <person name="Weltjens I."/>
            <person name="Vanstreels E."/>
            <person name="Rieger M."/>
            <person name="Schaefer M."/>
            <person name="Mueller-Auer S."/>
            <person name="Gabel C."/>
            <person name="Fuchs M."/>
            <person name="Duesterhoeft A."/>
            <person name="Fritzc C."/>
            <person name="Holzer E."/>
            <person name="Moestl D."/>
            <person name="Hilbert H."/>
            <person name="Borzym K."/>
            <person name="Langer I."/>
            <person name="Beck A."/>
            <person name="Lehrach H."/>
            <person name="Reinhardt R."/>
            <person name="Pohl T.M."/>
            <person name="Eger P."/>
            <person name="Zimmermann W."/>
            <person name="Wedler H."/>
            <person name="Wambutt R."/>
            <person name="Purnelle B."/>
            <person name="Goffeau A."/>
            <person name="Cadieu E."/>
            <person name="Dreano S."/>
            <person name="Gloux S."/>
            <person name="Lelaure V."/>
            <person name="Mottier S."/>
            <person name="Galibert F."/>
            <person name="Aves S.J."/>
            <person name="Xiang Z."/>
            <person name="Hunt C."/>
            <person name="Moore K."/>
            <person name="Hurst S.M."/>
            <person name="Lucas M."/>
            <person name="Rochet M."/>
            <person name="Gaillardin C."/>
            <person name="Tallada V.A."/>
            <person name="Garzon A."/>
            <person name="Thode G."/>
            <person name="Daga R.R."/>
            <person name="Cruzado L."/>
            <person name="Jimenez J."/>
            <person name="Sanchez M."/>
            <person name="del Rey F."/>
            <person name="Benito J."/>
            <person name="Dominguez A."/>
            <person name="Revuelta J.L."/>
            <person name="Moreno S."/>
            <person name="Armstrong J."/>
            <person name="Forsburg S.L."/>
            <person name="Cerutti L."/>
            <person name="Lowe T."/>
            <person name="McCombie W.R."/>
            <person name="Paulsen I."/>
            <person name="Potashkin J."/>
            <person name="Shpakovski G.V."/>
            <person name="Ussery D."/>
            <person name="Barrell B.G."/>
            <person name="Nurse P."/>
        </authorList>
    </citation>
    <scope>NUCLEOTIDE SEQUENCE [LARGE SCALE GENOMIC DNA]</scope>
    <source>
        <strain>972 / ATCC 24843</strain>
    </source>
</reference>
<reference key="2">
    <citation type="journal article" date="2006" name="Nat. Biotechnol.">
        <title>ORFeome cloning and global analysis of protein localization in the fission yeast Schizosaccharomyces pombe.</title>
        <authorList>
            <person name="Matsuyama A."/>
            <person name="Arai R."/>
            <person name="Yashiroda Y."/>
            <person name="Shirai A."/>
            <person name="Kamata A."/>
            <person name="Sekido S."/>
            <person name="Kobayashi Y."/>
            <person name="Hashimoto A."/>
            <person name="Hamamoto M."/>
            <person name="Hiraoka Y."/>
            <person name="Horinouchi S."/>
            <person name="Yoshida M."/>
        </authorList>
    </citation>
    <scope>SUBCELLULAR LOCATION [LARGE SCALE ANALYSIS]</scope>
</reference>
<feature type="chain" id="PRO_0000433408" description="Large ribosomal subunit protein uL11B">
    <location>
        <begin position="1"/>
        <end position="165"/>
    </location>
</feature>
<feature type="modified residue" description="N5-methylarginine" evidence="1">
    <location>
        <position position="67"/>
    </location>
</feature>
<sequence length="165" mass="17666">MPPKFDPNEVKTIFMRAVGGEVAGGSTLAPKIGPLGLSPKKVGEDIAKATKDWKGLRVTVKLTIQNRQAAVSVVPSASALVIKALKEPARDRKKDKNVAHSGNVSLDEIIEVARTMRFKSLAKELSGTVKEILGTAFSVGCTVDGKNPHDVQKEIDNGEIEIPQE</sequence>
<evidence type="ECO:0000250" key="1"/>
<evidence type="ECO:0000250" key="2">
    <source>
        <dbReference type="UniProtKB" id="P0CX54"/>
    </source>
</evidence>
<evidence type="ECO:0000269" key="3">
    <source>
    </source>
</evidence>
<evidence type="ECO:0000305" key="4"/>
<name>RL12B_SCHPO</name>